<accession>Q9ESC2</accession>
<keyword id="KW-1015">Disulfide bond</keyword>
<keyword id="KW-0325">Glycoprotein</keyword>
<keyword id="KW-0472">Membrane</keyword>
<keyword id="KW-0539">Nucleus</keyword>
<keyword id="KW-0597">Phosphoprotein</keyword>
<keyword id="KW-1185">Reference proteome</keyword>
<keyword id="KW-0735">Signal-anchor</keyword>
<keyword id="KW-0812">Transmembrane</keyword>
<keyword id="KW-1133">Transmembrane helix</keyword>
<reference key="1">
    <citation type="journal article" date="2001" name="Biochem. Biophys. Res. Commun.">
        <title>Molecular cloning and characterization of ChM1L, a novel membrane molecule similar to chondromodulin-I.</title>
        <authorList>
            <person name="Yamana K."/>
            <person name="Wada H."/>
            <person name="Takahashi Y."/>
            <person name="Sato H."/>
            <person name="Kasahara Y."/>
            <person name="Kiyoki M."/>
        </authorList>
    </citation>
    <scope>NUCLEOTIDE SEQUENCE [MRNA]</scope>
    <source>
        <strain>Sprague-Dawley</strain>
        <tissue>Skeletal muscle</tissue>
    </source>
</reference>
<reference key="2">
    <citation type="submission" date="1999-10" db="EMBL/GenBank/DDBJ databases">
        <title>Gene expression alterations revealed by suppression subtractive hybridization in rat soleus muscle disuse atrophy.</title>
        <authorList>
            <person name="Cros N."/>
            <person name="Tkatchenko A.V."/>
            <person name="Leclerc L."/>
            <person name="Leger J.J."/>
            <person name="Marini J.-F."/>
            <person name="Dechesne C.A."/>
        </authorList>
    </citation>
    <scope>NUCLEOTIDE SEQUENCE [MRNA]</scope>
</reference>
<reference key="3">
    <citation type="journal article" date="2010" name="J. Orthop. Res.">
        <title>Tendon-selective genes identified from rat and human musculoskeletal tissues.</title>
        <authorList>
            <person name="Jelinsky S.A."/>
            <person name="Archambault J."/>
            <person name="Li L."/>
            <person name="Seeherman H."/>
        </authorList>
    </citation>
    <scope>TISSUE SPECIFICITY</scope>
</reference>
<reference key="4">
    <citation type="journal article" date="2012" name="Nat. Commun.">
        <title>Quantitative maps of protein phosphorylation sites across 14 different rat organs and tissues.</title>
        <authorList>
            <person name="Lundby A."/>
            <person name="Secher A."/>
            <person name="Lage K."/>
            <person name="Nordsborg N.B."/>
            <person name="Dmytriyev A."/>
            <person name="Lundby C."/>
            <person name="Olsen J.V."/>
        </authorList>
    </citation>
    <scope>PHOSPHORYLATION [LARGE SCALE ANALYSIS] AT SER-239</scope>
    <scope>IDENTIFICATION BY MASS SPECTROMETRY [LARGE SCALE ANALYSIS]</scope>
</reference>
<dbReference type="EMBL" id="AF191769">
    <property type="protein sequence ID" value="AAG28394.1"/>
    <property type="molecule type" value="mRNA"/>
</dbReference>
<dbReference type="EMBL" id="AB055423">
    <property type="protein sequence ID" value="BAB21758.1"/>
    <property type="molecule type" value="mRNA"/>
</dbReference>
<dbReference type="RefSeq" id="NP_071626.1">
    <property type="nucleotide sequence ID" value="NM_022290.1"/>
</dbReference>
<dbReference type="FunCoup" id="Q9ESC2">
    <property type="interactions" value="4"/>
</dbReference>
<dbReference type="STRING" id="10116.ENSRNOP00000073972"/>
<dbReference type="GlyCosmos" id="Q9ESC2">
    <property type="glycosylation" value="2 sites, No reported glycans"/>
</dbReference>
<dbReference type="GlyGen" id="Q9ESC2">
    <property type="glycosylation" value="2 sites"/>
</dbReference>
<dbReference type="iPTMnet" id="Q9ESC2"/>
<dbReference type="PhosphoSitePlus" id="Q9ESC2"/>
<dbReference type="PaxDb" id="10116-ENSRNOP00000005214"/>
<dbReference type="Ensembl" id="ENSRNOT00000083229.2">
    <property type="protein sequence ID" value="ENSRNOP00000073972.1"/>
    <property type="gene ID" value="ENSRNOG00000060970.2"/>
</dbReference>
<dbReference type="GeneID" id="64104"/>
<dbReference type="KEGG" id="rno:64104"/>
<dbReference type="UCSC" id="RGD:620938">
    <property type="organism name" value="rat"/>
</dbReference>
<dbReference type="AGR" id="RGD:620938"/>
<dbReference type="CTD" id="64102"/>
<dbReference type="RGD" id="620938">
    <property type="gene designation" value="Tnmd"/>
</dbReference>
<dbReference type="eggNOG" id="ENOG502QPTP">
    <property type="taxonomic scope" value="Eukaryota"/>
</dbReference>
<dbReference type="GeneTree" id="ENSGT00480000042679"/>
<dbReference type="HOGENOM" id="CLU_071852_1_0_1"/>
<dbReference type="InParanoid" id="Q9ESC2"/>
<dbReference type="OrthoDB" id="54411at9989"/>
<dbReference type="PhylomeDB" id="Q9ESC2"/>
<dbReference type="TreeFam" id="TF329712"/>
<dbReference type="PRO" id="PR:Q9ESC2"/>
<dbReference type="Proteomes" id="UP000002494">
    <property type="component" value="Chromosome X"/>
</dbReference>
<dbReference type="Bgee" id="ENSRNOG00000060970">
    <property type="expression patterns" value="Expressed in quadriceps femoris and 11 other cell types or tissues"/>
</dbReference>
<dbReference type="GO" id="GO:0009986">
    <property type="term" value="C:cell surface"/>
    <property type="evidence" value="ECO:0000303"/>
    <property type="project" value="RGD"/>
</dbReference>
<dbReference type="GO" id="GO:0016020">
    <property type="term" value="C:membrane"/>
    <property type="evidence" value="ECO:0007669"/>
    <property type="project" value="UniProtKB-SubCell"/>
</dbReference>
<dbReference type="GO" id="GO:0005635">
    <property type="term" value="C:nuclear envelope"/>
    <property type="evidence" value="ECO:0007669"/>
    <property type="project" value="UniProtKB-SubCell"/>
</dbReference>
<dbReference type="GO" id="GO:0071773">
    <property type="term" value="P:cellular response to BMP stimulus"/>
    <property type="evidence" value="ECO:0000270"/>
    <property type="project" value="UniProtKB"/>
</dbReference>
<dbReference type="GO" id="GO:0001886">
    <property type="term" value="P:endothelial cell morphogenesis"/>
    <property type="evidence" value="ECO:0000266"/>
    <property type="project" value="RGD"/>
</dbReference>
<dbReference type="GO" id="GO:0016525">
    <property type="term" value="P:negative regulation of angiogenesis"/>
    <property type="evidence" value="ECO:0000266"/>
    <property type="project" value="RGD"/>
</dbReference>
<dbReference type="GO" id="GO:0001937">
    <property type="term" value="P:negative regulation of endothelial cell proliferation"/>
    <property type="evidence" value="ECO:0000266"/>
    <property type="project" value="RGD"/>
</dbReference>
<dbReference type="GO" id="GO:0035990">
    <property type="term" value="P:tendon cell differentiation"/>
    <property type="evidence" value="ECO:0000270"/>
    <property type="project" value="UniProtKB"/>
</dbReference>
<dbReference type="InterPro" id="IPR007084">
    <property type="entry name" value="BRICHOS_dom"/>
</dbReference>
<dbReference type="InterPro" id="IPR043405">
    <property type="entry name" value="Chondromodulin/Tenomodulin"/>
</dbReference>
<dbReference type="PANTHER" id="PTHR14064">
    <property type="entry name" value="CHONDROMODULIN-RELATED"/>
    <property type="match status" value="1"/>
</dbReference>
<dbReference type="PANTHER" id="PTHR14064:SF3">
    <property type="entry name" value="TENOMODULIN"/>
    <property type="match status" value="1"/>
</dbReference>
<dbReference type="Pfam" id="PF04089">
    <property type="entry name" value="BRICHOS"/>
    <property type="match status" value="1"/>
</dbReference>
<dbReference type="SMART" id="SM01039">
    <property type="entry name" value="BRICHOS"/>
    <property type="match status" value="1"/>
</dbReference>
<dbReference type="PROSITE" id="PS50869">
    <property type="entry name" value="BRICHOS"/>
    <property type="match status" value="1"/>
</dbReference>
<organism>
    <name type="scientific">Rattus norvegicus</name>
    <name type="common">Rat</name>
    <dbReference type="NCBI Taxonomy" id="10116"/>
    <lineage>
        <taxon>Eukaryota</taxon>
        <taxon>Metazoa</taxon>
        <taxon>Chordata</taxon>
        <taxon>Craniata</taxon>
        <taxon>Vertebrata</taxon>
        <taxon>Euteleostomi</taxon>
        <taxon>Mammalia</taxon>
        <taxon>Eutheria</taxon>
        <taxon>Euarchontoglires</taxon>
        <taxon>Glires</taxon>
        <taxon>Rodentia</taxon>
        <taxon>Myomorpha</taxon>
        <taxon>Muroidea</taxon>
        <taxon>Muridae</taxon>
        <taxon>Murinae</taxon>
        <taxon>Rattus</taxon>
    </lineage>
</organism>
<protein>
    <recommendedName>
        <fullName>Tenomodulin</fullName>
        <shortName>TeM</shortName>
        <shortName>rTeM</shortName>
    </recommendedName>
    <alternativeName>
        <fullName>Chondromodulin-1-like protein</fullName>
        <shortName>ChM1L</shortName>
        <shortName>rChM1L</shortName>
    </alternativeName>
    <alternativeName>
        <fullName>Myodulin</fullName>
    </alternativeName>
</protein>
<proteinExistence type="evidence at protein level"/>
<name>TNMD_RAT</name>
<feature type="chain" id="PRO_0000144310" description="Tenomodulin">
    <location>
        <begin position="1"/>
        <end position="317"/>
    </location>
</feature>
<feature type="topological domain" description="Cytoplasmic" evidence="2">
    <location>
        <begin position="1"/>
        <end position="30"/>
    </location>
</feature>
<feature type="transmembrane region" description="Helical; Signal-anchor for type II membrane protein" evidence="2">
    <location>
        <begin position="31"/>
        <end position="50"/>
    </location>
</feature>
<feature type="topological domain" description="Extracellular" evidence="2">
    <location>
        <begin position="51"/>
        <end position="317"/>
    </location>
</feature>
<feature type="domain" description="BRICHOS" evidence="3">
    <location>
        <begin position="93"/>
        <end position="186"/>
    </location>
</feature>
<feature type="modified residue" description="Phosphoserine" evidence="6">
    <location>
        <position position="239"/>
    </location>
</feature>
<feature type="glycosylation site" description="N-linked (GlcNAc...) asparagine" evidence="2">
    <location>
        <position position="94"/>
    </location>
</feature>
<feature type="glycosylation site" description="N-linked (GlcNAc...) asparagine" evidence="2">
    <location>
        <position position="180"/>
    </location>
</feature>
<feature type="disulfide bond" evidence="1">
    <location>
        <begin position="120"/>
        <end position="178"/>
    </location>
</feature>
<comment type="function">
    <text>May be an angiogenesis inhibitor.</text>
</comment>
<comment type="subcellular location">
    <subcellularLocation>
        <location evidence="5">Membrane</location>
        <topology evidence="5">Single-pass type II membrane protein</topology>
    </subcellularLocation>
    <subcellularLocation>
        <location evidence="1">Nucleus envelope</location>
    </subcellularLocation>
</comment>
<comment type="tissue specificity">
    <text evidence="4">Highly expressed in tendons.</text>
</comment>
<comment type="similarity">
    <text evidence="5">Belongs to the chondromodulin-1 family.</text>
</comment>
<gene>
    <name type="primary">Tnmd</name>
    <name type="synonym">Chm1l</name>
</gene>
<evidence type="ECO:0000250" key="1"/>
<evidence type="ECO:0000255" key="2"/>
<evidence type="ECO:0000255" key="3">
    <source>
        <dbReference type="PROSITE-ProRule" id="PRU00255"/>
    </source>
</evidence>
<evidence type="ECO:0000269" key="4">
    <source>
    </source>
</evidence>
<evidence type="ECO:0000305" key="5"/>
<evidence type="ECO:0007744" key="6">
    <source>
    </source>
</evidence>
<sequence>MAKNPPENCEGCHILNAEALKSKKIRKSLKICGLVFGILALTLIVLFWGSKHFWPEVSKKTYGMEHTFYSNGEKKKISMEIDPITRTEIFRSGNGTDETLEVHDFKNGYTGIYFVGLQKCFIKTQIKVIPEFSEPEEEIDENEEITTTFFEQSVIWVPAEKPIENRDFLKNSKILEICDNVTMYWINPTLIAVSELQDFEEDGEDLHFPTSEKKGIDQNEQWVVPQVKVEKTRRTRQASEEDLPVNDYTENGIEFDPMLDERGYCCIYCRRGNRYCRRVCEPLLGYYPYPYCYQGGRVICRVIMPCNWWVARMLGRV</sequence>